<proteinExistence type="inferred from homology"/>
<keyword id="KW-1185">Reference proteome</keyword>
<sequence>MPRINIGLTDEQRQGVINLLNQDLADSYLLLVKTKKYHWDVVGPQFRSLHQLWEEHYEKLTENIDAIAERVRTLGGYPIGSMEGFLQLATLKEHAGDVPSATGMVANLVQDHEQLIRNLRDHVDRSGDEFQDQGTADFLTGLMEEHEEIAWMLRSFIEGQPIEPNGTQPATETKTPVGV</sequence>
<organism>
    <name type="scientific">Nostoc sp. (strain PCC 7120 / SAG 25.82 / UTEX 2576)</name>
    <dbReference type="NCBI Taxonomy" id="103690"/>
    <lineage>
        <taxon>Bacteria</taxon>
        <taxon>Bacillati</taxon>
        <taxon>Cyanobacteriota</taxon>
        <taxon>Cyanophyceae</taxon>
        <taxon>Nostocales</taxon>
        <taxon>Nostocaceae</taxon>
        <taxon>Nostoc</taxon>
    </lineage>
</organism>
<dbReference type="EMBL" id="BA000019">
    <property type="protein sequence ID" value="BAB72416.1"/>
    <property type="molecule type" value="Genomic_DNA"/>
</dbReference>
<dbReference type="PIR" id="AI1863">
    <property type="entry name" value="AI1863"/>
</dbReference>
<dbReference type="RefSeq" id="WP_010994634.1">
    <property type="nucleotide sequence ID" value="NZ_RSCN01000024.1"/>
</dbReference>
<dbReference type="SMR" id="P0A3A7"/>
<dbReference type="STRING" id="103690.gene:10492467"/>
<dbReference type="KEGG" id="ana:all0458"/>
<dbReference type="eggNOG" id="COG0783">
    <property type="taxonomic scope" value="Bacteria"/>
</dbReference>
<dbReference type="OrthoDB" id="9797023at2"/>
<dbReference type="Proteomes" id="UP000002483">
    <property type="component" value="Chromosome"/>
</dbReference>
<dbReference type="GO" id="GO:0008199">
    <property type="term" value="F:ferric iron binding"/>
    <property type="evidence" value="ECO:0007669"/>
    <property type="project" value="InterPro"/>
</dbReference>
<dbReference type="GO" id="GO:0016722">
    <property type="term" value="F:oxidoreductase activity, acting on metal ions"/>
    <property type="evidence" value="ECO:0007669"/>
    <property type="project" value="InterPro"/>
</dbReference>
<dbReference type="CDD" id="cd01043">
    <property type="entry name" value="DPS"/>
    <property type="match status" value="1"/>
</dbReference>
<dbReference type="Gene3D" id="1.20.1260.10">
    <property type="match status" value="1"/>
</dbReference>
<dbReference type="InterPro" id="IPR002177">
    <property type="entry name" value="DPS_DNA-bd"/>
</dbReference>
<dbReference type="InterPro" id="IPR023188">
    <property type="entry name" value="DPS_DNA-bd_CS"/>
</dbReference>
<dbReference type="InterPro" id="IPR012347">
    <property type="entry name" value="Ferritin-like"/>
</dbReference>
<dbReference type="InterPro" id="IPR009078">
    <property type="entry name" value="Ferritin-like_SF"/>
</dbReference>
<dbReference type="InterPro" id="IPR008331">
    <property type="entry name" value="Ferritin_DPS_dom"/>
</dbReference>
<dbReference type="PANTHER" id="PTHR42932:SF3">
    <property type="entry name" value="DNA PROTECTION DURING STARVATION PROTEIN"/>
    <property type="match status" value="1"/>
</dbReference>
<dbReference type="PANTHER" id="PTHR42932">
    <property type="entry name" value="GENERAL STRESS PROTEIN 20U"/>
    <property type="match status" value="1"/>
</dbReference>
<dbReference type="Pfam" id="PF00210">
    <property type="entry name" value="Ferritin"/>
    <property type="match status" value="1"/>
</dbReference>
<dbReference type="PIRSF" id="PIRSF005900">
    <property type="entry name" value="Dps"/>
    <property type="match status" value="1"/>
</dbReference>
<dbReference type="PRINTS" id="PR01346">
    <property type="entry name" value="HELNAPAPROT"/>
</dbReference>
<dbReference type="SUPFAM" id="SSF47240">
    <property type="entry name" value="Ferritin-like"/>
    <property type="match status" value="1"/>
</dbReference>
<dbReference type="PROSITE" id="PS00818">
    <property type="entry name" value="DPS_1"/>
    <property type="match status" value="1"/>
</dbReference>
<dbReference type="PROSITE" id="PS00819">
    <property type="entry name" value="DPS_2"/>
    <property type="match status" value="1"/>
</dbReference>
<comment type="similarity">
    <text evidence="2">Belongs to the Dps family.</text>
</comment>
<protein>
    <recommendedName>
        <fullName>Uncharacterized low temperature-induced protein all0458</fullName>
    </recommendedName>
</protein>
<accession>P0A3A7</accession>
<accession>P29712</accession>
<feature type="chain" id="PRO_0000201666" description="Uncharacterized low temperature-induced protein all0458">
    <location>
        <begin position="1"/>
        <end position="179"/>
    </location>
</feature>
<feature type="region of interest" description="Disordered" evidence="1">
    <location>
        <begin position="160"/>
        <end position="179"/>
    </location>
</feature>
<feature type="compositionally biased region" description="Polar residues" evidence="1">
    <location>
        <begin position="165"/>
        <end position="179"/>
    </location>
</feature>
<name>Y458_NOSS1</name>
<reference key="1">
    <citation type="journal article" date="2001" name="DNA Res.">
        <title>Complete genomic sequence of the filamentous nitrogen-fixing cyanobacterium Anabaena sp. strain PCC 7120.</title>
        <authorList>
            <person name="Kaneko T."/>
            <person name="Nakamura Y."/>
            <person name="Wolk C.P."/>
            <person name="Kuritz T."/>
            <person name="Sasamoto S."/>
            <person name="Watanabe A."/>
            <person name="Iriguchi M."/>
            <person name="Ishikawa A."/>
            <person name="Kawashima K."/>
            <person name="Kimura T."/>
            <person name="Kishida Y."/>
            <person name="Kohara M."/>
            <person name="Matsumoto M."/>
            <person name="Matsuno A."/>
            <person name="Muraki A."/>
            <person name="Nakazaki N."/>
            <person name="Shimpo S."/>
            <person name="Sugimoto M."/>
            <person name="Takazawa M."/>
            <person name="Yamada M."/>
            <person name="Yasuda M."/>
            <person name="Tabata S."/>
        </authorList>
    </citation>
    <scope>NUCLEOTIDE SEQUENCE [LARGE SCALE GENOMIC DNA]</scope>
    <source>
        <strain>PCC 7120 / SAG 25.82 / UTEX 2576</strain>
    </source>
</reference>
<gene>
    <name type="ordered locus">all0458</name>
</gene>
<evidence type="ECO:0000256" key="1">
    <source>
        <dbReference type="SAM" id="MobiDB-lite"/>
    </source>
</evidence>
<evidence type="ECO:0000305" key="2"/>